<sequence>MCIVKTLHLITHVMKEYNSQFTEGSDFSLIEEQILEFWKENNIFKKSIENRDEKRRFIFYDGPPFANGLPHYGHLLTGFIKDTVARYKTMAGFRVDRRFGWDCHGLPAEMLAEKELGVSGKLAIEKFGIEKFNNYCRNSVMKFSREWKQYIDRQSRWVDFENDYKTMNLSFMESIMWSFYQLWQKGLIYESIKIVPYSWACQTPLSNFETRIDNAYRQKTSKTVTLAFELLDAPKSLIVDNITAYKILVWTTTPWTLPCNLALAISPNIKYCGAIINKEMYIFSRAYLKNFEDHCRKNNIEYLIHNGDICYLSLEYLSYKPVFNYFIDIKNAFKVLVADFVVEDEGTGIVHMAPGFGEDDFILCKKQGIPDIDDKDTSKLLATICPIDDGGKFTERISDFVNMHVFDTNDQIISILKAKNLCFKTDQYLHNYPHCWRTDTPLIYRAMSSWYVEVTKIKNRMIDLNKDVNWIPSHIRSGQFGKWLENAKDWAISRNRFWGTPLPVWKSDNPNYPRVDVYGSIKKVFDDIKALEEDFDIPIDDLHRPYIDNLVRPNPDDPTGKSMMRRVTDVFDCWFESGSMPYAQLHYPFENKELFENYFPADFITEYVAQTRGWFYTLFVLSTALFDKPPFKNCICHGVVLDTQGQKLSKRLNNYADPMEIFKQYGSDAMRFLMLSHTVSYGGDLLLDKDGVMVRDVIRNVIKPMWNSYNFFTIYADIDKVNARVISDLDEVDNIMDKYIMCECISTIQSIFNAMEEFDQSVGNYGYNIKAACNSIVQFFEVLNNWYIRRCRSRFWSSEITKDKVNAYNTLYTVMYYMVKVSAPFLPAITEAIWQKLNFQEEESVHLSLLPNIEHITLKDEDQKNIQYMKLIINICGCVLSIRNVRNIRVRQPLNKITIYSYNNNDLFNLPVKYQNILLDEINVKSIVFKSNIEDIASFQLKLNFPELGKRIPEKMKNLISLLKSNQWKILENGQLMLGIREGEHYILEDNEYTLNLKVHSEFASTITLGPNLLGVLVLDNTLTDELIMEGIARDIVRIIQQSRKDNKFNVSDKIDVVICTQDKMVKNSVQAWYEYIVQQTLSLSLVIYENLDANNVAEYCKTTMKDRNLTLFIKKL</sequence>
<proteinExistence type="inferred from homology"/>
<accession>Q5HB43</accession>
<accession>Q5FEI3</accession>
<keyword id="KW-0030">Aminoacyl-tRNA synthetase</keyword>
<keyword id="KW-0067">ATP-binding</keyword>
<keyword id="KW-0963">Cytoplasm</keyword>
<keyword id="KW-0436">Ligase</keyword>
<keyword id="KW-0479">Metal-binding</keyword>
<keyword id="KW-0547">Nucleotide-binding</keyword>
<keyword id="KW-0648">Protein biosynthesis</keyword>
<keyword id="KW-0862">Zinc</keyword>
<name>SYI_EHRRW</name>
<organism>
    <name type="scientific">Ehrlichia ruminantium (strain Welgevonden)</name>
    <dbReference type="NCBI Taxonomy" id="254945"/>
    <lineage>
        <taxon>Bacteria</taxon>
        <taxon>Pseudomonadati</taxon>
        <taxon>Pseudomonadota</taxon>
        <taxon>Alphaproteobacteria</taxon>
        <taxon>Rickettsiales</taxon>
        <taxon>Anaplasmataceae</taxon>
        <taxon>Ehrlichia</taxon>
    </lineage>
</organism>
<reference key="1">
    <citation type="journal article" date="2005" name="Proc. Natl. Acad. Sci. U.S.A.">
        <title>The genome of the heartwater agent Ehrlichia ruminantium contains multiple tandem repeats of actively variable copy number.</title>
        <authorList>
            <person name="Collins N.E."/>
            <person name="Liebenberg J."/>
            <person name="de Villiers E.P."/>
            <person name="Brayton K.A."/>
            <person name="Louw E."/>
            <person name="Pretorius A."/>
            <person name="Faber F.E."/>
            <person name="van Heerden H."/>
            <person name="Josemans A."/>
            <person name="van Kleef M."/>
            <person name="Steyn H.C."/>
            <person name="van Strijp M.F."/>
            <person name="Zweygarth E."/>
            <person name="Jongejan F."/>
            <person name="Maillard J.C."/>
            <person name="Berthier D."/>
            <person name="Botha M."/>
            <person name="Joubert F."/>
            <person name="Corton C.H."/>
            <person name="Thomson N.R."/>
            <person name="Allsopp M.T."/>
            <person name="Allsopp B.A."/>
        </authorList>
    </citation>
    <scope>NUCLEOTIDE SEQUENCE [LARGE SCALE GENOMIC DNA]</scope>
    <source>
        <strain>Welgevonden</strain>
    </source>
</reference>
<reference key="2">
    <citation type="journal article" date="2006" name="J. Bacteriol.">
        <title>Comparative genomic analysis of three strains of Ehrlichia ruminantium reveals an active process of genome size plasticity.</title>
        <authorList>
            <person name="Frutos R."/>
            <person name="Viari A."/>
            <person name="Ferraz C."/>
            <person name="Morgat A."/>
            <person name="Eychenie S."/>
            <person name="Kandassamy Y."/>
            <person name="Chantal I."/>
            <person name="Bensaid A."/>
            <person name="Coissac E."/>
            <person name="Vachiery N."/>
            <person name="Demaille J."/>
            <person name="Martinez D."/>
        </authorList>
    </citation>
    <scope>NUCLEOTIDE SEQUENCE [LARGE SCALE GENOMIC DNA]</scope>
    <source>
        <strain>Welgevonden</strain>
    </source>
</reference>
<gene>
    <name evidence="1" type="primary">ileS</name>
    <name type="ordered locus">Erum4870</name>
    <name type="ordered locus">ERWE_CDS_05090</name>
</gene>
<feature type="chain" id="PRO_0000098545" description="Isoleucine--tRNA ligase">
    <location>
        <begin position="1"/>
        <end position="1117"/>
    </location>
</feature>
<feature type="short sequence motif" description="'HIGH' region">
    <location>
        <begin position="64"/>
        <end position="74"/>
    </location>
</feature>
<feature type="short sequence motif" description="'KMSKS' region">
    <location>
        <begin position="647"/>
        <end position="651"/>
    </location>
</feature>
<feature type="binding site" evidence="1">
    <location>
        <position position="650"/>
    </location>
    <ligand>
        <name>ATP</name>
        <dbReference type="ChEBI" id="CHEBI:30616"/>
    </ligand>
</feature>
<protein>
    <recommendedName>
        <fullName evidence="1">Isoleucine--tRNA ligase</fullName>
        <ecNumber evidence="1">6.1.1.5</ecNumber>
    </recommendedName>
    <alternativeName>
        <fullName evidence="1">Isoleucyl-tRNA synthetase</fullName>
        <shortName evidence="1">IleRS</shortName>
    </alternativeName>
</protein>
<evidence type="ECO:0000255" key="1">
    <source>
        <dbReference type="HAMAP-Rule" id="MF_02003"/>
    </source>
</evidence>
<evidence type="ECO:0000305" key="2"/>
<dbReference type="EC" id="6.1.1.5" evidence="1"/>
<dbReference type="EMBL" id="CR767821">
    <property type="protein sequence ID" value="CAH58215.1"/>
    <property type="status" value="ALT_INIT"/>
    <property type="molecule type" value="Genomic_DNA"/>
</dbReference>
<dbReference type="EMBL" id="CR925678">
    <property type="protein sequence ID" value="CAI27003.1"/>
    <property type="status" value="ALT_INIT"/>
    <property type="molecule type" value="Genomic_DNA"/>
</dbReference>
<dbReference type="RefSeq" id="WP_011155168.1">
    <property type="nucleotide sequence ID" value="NC_006832.1"/>
</dbReference>
<dbReference type="SMR" id="Q5HB43"/>
<dbReference type="GeneID" id="33057477"/>
<dbReference type="KEGG" id="eru:Erum4870"/>
<dbReference type="KEGG" id="erw:ERWE_CDS_05090"/>
<dbReference type="eggNOG" id="COG0060">
    <property type="taxonomic scope" value="Bacteria"/>
</dbReference>
<dbReference type="HOGENOM" id="CLU_001493_1_1_5"/>
<dbReference type="Proteomes" id="UP000001021">
    <property type="component" value="Chromosome"/>
</dbReference>
<dbReference type="GO" id="GO:0005737">
    <property type="term" value="C:cytoplasm"/>
    <property type="evidence" value="ECO:0007669"/>
    <property type="project" value="UniProtKB-SubCell"/>
</dbReference>
<dbReference type="GO" id="GO:0002161">
    <property type="term" value="F:aminoacyl-tRNA deacylase activity"/>
    <property type="evidence" value="ECO:0007669"/>
    <property type="project" value="InterPro"/>
</dbReference>
<dbReference type="GO" id="GO:0005524">
    <property type="term" value="F:ATP binding"/>
    <property type="evidence" value="ECO:0007669"/>
    <property type="project" value="UniProtKB-UniRule"/>
</dbReference>
<dbReference type="GO" id="GO:0004822">
    <property type="term" value="F:isoleucine-tRNA ligase activity"/>
    <property type="evidence" value="ECO:0007669"/>
    <property type="project" value="UniProtKB-UniRule"/>
</dbReference>
<dbReference type="GO" id="GO:0000049">
    <property type="term" value="F:tRNA binding"/>
    <property type="evidence" value="ECO:0007669"/>
    <property type="project" value="InterPro"/>
</dbReference>
<dbReference type="GO" id="GO:0008270">
    <property type="term" value="F:zinc ion binding"/>
    <property type="evidence" value="ECO:0007669"/>
    <property type="project" value="UniProtKB-UniRule"/>
</dbReference>
<dbReference type="GO" id="GO:0006428">
    <property type="term" value="P:isoleucyl-tRNA aminoacylation"/>
    <property type="evidence" value="ECO:0007669"/>
    <property type="project" value="UniProtKB-UniRule"/>
</dbReference>
<dbReference type="CDD" id="cd07961">
    <property type="entry name" value="Anticodon_Ia_Ile_ABEc"/>
    <property type="match status" value="1"/>
</dbReference>
<dbReference type="CDD" id="cd00818">
    <property type="entry name" value="IleRS_core"/>
    <property type="match status" value="1"/>
</dbReference>
<dbReference type="FunFam" id="3.40.50.620:FF:000075">
    <property type="entry name" value="Isoleucine--tRNA ligase"/>
    <property type="match status" value="1"/>
</dbReference>
<dbReference type="FunFam" id="3.40.50.620:FF:000241">
    <property type="entry name" value="Isoleucine--tRNA ligase"/>
    <property type="match status" value="1"/>
</dbReference>
<dbReference type="Gene3D" id="3.40.50.620">
    <property type="entry name" value="HUPs"/>
    <property type="match status" value="2"/>
</dbReference>
<dbReference type="Gene3D" id="1.10.730.10">
    <property type="entry name" value="Isoleucyl-tRNA Synthetase, Domain 1"/>
    <property type="match status" value="1"/>
</dbReference>
<dbReference type="HAMAP" id="MF_02003">
    <property type="entry name" value="Ile_tRNA_synth_type2"/>
    <property type="match status" value="1"/>
</dbReference>
<dbReference type="InterPro" id="IPR001412">
    <property type="entry name" value="aa-tRNA-synth_I_CS"/>
</dbReference>
<dbReference type="InterPro" id="IPR002300">
    <property type="entry name" value="aa-tRNA-synth_Ia"/>
</dbReference>
<dbReference type="InterPro" id="IPR033709">
    <property type="entry name" value="Anticodon_Ile_ABEc"/>
</dbReference>
<dbReference type="InterPro" id="IPR002301">
    <property type="entry name" value="Ile-tRNA-ligase"/>
</dbReference>
<dbReference type="InterPro" id="IPR023586">
    <property type="entry name" value="Ile-tRNA-ligase_type2"/>
</dbReference>
<dbReference type="InterPro" id="IPR013155">
    <property type="entry name" value="M/V/L/I-tRNA-synth_anticd-bd"/>
</dbReference>
<dbReference type="InterPro" id="IPR014729">
    <property type="entry name" value="Rossmann-like_a/b/a_fold"/>
</dbReference>
<dbReference type="InterPro" id="IPR009080">
    <property type="entry name" value="tRNAsynth_Ia_anticodon-bd"/>
</dbReference>
<dbReference type="InterPro" id="IPR009008">
    <property type="entry name" value="Val/Leu/Ile-tRNA-synth_edit"/>
</dbReference>
<dbReference type="NCBIfam" id="TIGR00392">
    <property type="entry name" value="ileS"/>
    <property type="match status" value="1"/>
</dbReference>
<dbReference type="PANTHER" id="PTHR42780:SF1">
    <property type="entry name" value="ISOLEUCINE--TRNA LIGASE, CYTOPLASMIC"/>
    <property type="match status" value="1"/>
</dbReference>
<dbReference type="PANTHER" id="PTHR42780">
    <property type="entry name" value="SOLEUCYL-TRNA SYNTHETASE"/>
    <property type="match status" value="1"/>
</dbReference>
<dbReference type="Pfam" id="PF08264">
    <property type="entry name" value="Anticodon_1"/>
    <property type="match status" value="1"/>
</dbReference>
<dbReference type="Pfam" id="PF19302">
    <property type="entry name" value="DUF5915"/>
    <property type="match status" value="1"/>
</dbReference>
<dbReference type="Pfam" id="PF00133">
    <property type="entry name" value="tRNA-synt_1"/>
    <property type="match status" value="1"/>
</dbReference>
<dbReference type="PRINTS" id="PR00984">
    <property type="entry name" value="TRNASYNTHILE"/>
</dbReference>
<dbReference type="SUPFAM" id="SSF47323">
    <property type="entry name" value="Anticodon-binding domain of a subclass of class I aminoacyl-tRNA synthetases"/>
    <property type="match status" value="1"/>
</dbReference>
<dbReference type="SUPFAM" id="SSF52374">
    <property type="entry name" value="Nucleotidylyl transferase"/>
    <property type="match status" value="1"/>
</dbReference>
<dbReference type="SUPFAM" id="SSF50677">
    <property type="entry name" value="ValRS/IleRS/LeuRS editing domain"/>
    <property type="match status" value="1"/>
</dbReference>
<dbReference type="PROSITE" id="PS00178">
    <property type="entry name" value="AA_TRNA_LIGASE_I"/>
    <property type="match status" value="1"/>
</dbReference>
<comment type="function">
    <text evidence="1">Catalyzes the attachment of isoleucine to tRNA(Ile). As IleRS can inadvertently accommodate and process structurally similar amino acids such as valine, to avoid such errors it has two additional distinct tRNA(Ile)-dependent editing activities. One activity is designated as 'pretransfer' editing and involves the hydrolysis of activated Val-AMP. The other activity is designated 'posttransfer' editing and involves deacylation of mischarged Val-tRNA(Ile).</text>
</comment>
<comment type="catalytic activity">
    <reaction evidence="1">
        <text>tRNA(Ile) + L-isoleucine + ATP = L-isoleucyl-tRNA(Ile) + AMP + diphosphate</text>
        <dbReference type="Rhea" id="RHEA:11060"/>
        <dbReference type="Rhea" id="RHEA-COMP:9666"/>
        <dbReference type="Rhea" id="RHEA-COMP:9695"/>
        <dbReference type="ChEBI" id="CHEBI:30616"/>
        <dbReference type="ChEBI" id="CHEBI:33019"/>
        <dbReference type="ChEBI" id="CHEBI:58045"/>
        <dbReference type="ChEBI" id="CHEBI:78442"/>
        <dbReference type="ChEBI" id="CHEBI:78528"/>
        <dbReference type="ChEBI" id="CHEBI:456215"/>
        <dbReference type="EC" id="6.1.1.5"/>
    </reaction>
</comment>
<comment type="cofactor">
    <cofactor evidence="1">
        <name>Zn(2+)</name>
        <dbReference type="ChEBI" id="CHEBI:29105"/>
    </cofactor>
</comment>
<comment type="subunit">
    <text evidence="1">Monomer.</text>
</comment>
<comment type="subcellular location">
    <subcellularLocation>
        <location evidence="1">Cytoplasm</location>
    </subcellularLocation>
</comment>
<comment type="domain">
    <text evidence="1">IleRS has two distinct active sites: one for aminoacylation and one for editing. The misactivated valine is translocated from the active site to the editing site, which sterically excludes the correctly activated isoleucine. The single editing site contains two valyl binding pockets, one specific for each substrate (Val-AMP or Val-tRNA(Ile)).</text>
</comment>
<comment type="similarity">
    <text evidence="1">Belongs to the class-I aminoacyl-tRNA synthetase family. IleS type 2 subfamily.</text>
</comment>
<comment type="sequence caution" evidence="2">
    <conflict type="erroneous initiation">
        <sequence resource="EMBL-CDS" id="CAH58215"/>
    </conflict>
</comment>
<comment type="sequence caution" evidence="2">
    <conflict type="erroneous initiation">
        <sequence resource="EMBL-CDS" id="CAI27003"/>
    </conflict>
</comment>